<proteinExistence type="inferred from homology"/>
<reference key="1">
    <citation type="journal article" date="1992" name="J. Biol. Chem.">
        <title>Cytochrome aa3 of Rhodobacter sphaeroides as a model for mitochondrial cytochrome c oxidase. The coxII/coxIII operon codes for structural and assembly proteins homologous to those in yeast.</title>
        <authorList>
            <person name="Cao J."/>
            <person name="Hosler J.P."/>
            <person name="Shapleigh J."/>
            <person name="Revzin A."/>
            <person name="Ferguson-Miller S."/>
        </authorList>
    </citation>
    <scope>NUCLEOTIDE SEQUENCE [GENOMIC DNA]</scope>
</reference>
<feature type="chain" id="PRO_0000162909" description="Protoheme IX farnesyltransferase">
    <location>
        <begin position="1"/>
        <end position="284"/>
    </location>
</feature>
<feature type="transmembrane region" description="Helical" evidence="1">
    <location>
        <begin position="2"/>
        <end position="19"/>
    </location>
</feature>
<feature type="transmembrane region" description="Helical" evidence="1">
    <location>
        <begin position="23"/>
        <end position="45"/>
    </location>
</feature>
<feature type="transmembrane region" description="Helical" evidence="1">
    <location>
        <begin position="69"/>
        <end position="89"/>
    </location>
</feature>
<feature type="transmembrane region" description="Helical" evidence="1">
    <location>
        <begin position="92"/>
        <end position="112"/>
    </location>
</feature>
<feature type="transmembrane region" description="Helical" evidence="1">
    <location>
        <begin position="121"/>
        <end position="141"/>
    </location>
</feature>
<feature type="transmembrane region" description="Helical" evidence="1">
    <location>
        <begin position="148"/>
        <end position="168"/>
    </location>
</feature>
<feature type="transmembrane region" description="Helical" evidence="1">
    <location>
        <begin position="194"/>
        <end position="214"/>
    </location>
</feature>
<feature type="transmembrane region" description="Helical" evidence="1">
    <location>
        <begin position="217"/>
        <end position="237"/>
    </location>
</feature>
<feature type="transmembrane region" description="Helical" evidence="1">
    <location>
        <begin position="263"/>
        <end position="283"/>
    </location>
</feature>
<accession>P56938</accession>
<dbReference type="EC" id="2.5.1.141" evidence="1"/>
<dbReference type="PIR" id="A45164">
    <property type="entry name" value="A45164"/>
</dbReference>
<dbReference type="SMR" id="P56938"/>
<dbReference type="UniPathway" id="UPA00834">
    <property type="reaction ID" value="UER00712"/>
</dbReference>
<dbReference type="GO" id="GO:0005886">
    <property type="term" value="C:plasma membrane"/>
    <property type="evidence" value="ECO:0007669"/>
    <property type="project" value="UniProtKB-SubCell"/>
</dbReference>
<dbReference type="GO" id="GO:0008495">
    <property type="term" value="F:protoheme IX farnesyltransferase activity"/>
    <property type="evidence" value="ECO:0007669"/>
    <property type="project" value="UniProtKB-UniRule"/>
</dbReference>
<dbReference type="GO" id="GO:0048034">
    <property type="term" value="P:heme O biosynthetic process"/>
    <property type="evidence" value="ECO:0007669"/>
    <property type="project" value="UniProtKB-UniRule"/>
</dbReference>
<dbReference type="CDD" id="cd13957">
    <property type="entry name" value="PT_UbiA_Cox10"/>
    <property type="match status" value="1"/>
</dbReference>
<dbReference type="Gene3D" id="1.10.357.140">
    <property type="entry name" value="UbiA prenyltransferase"/>
    <property type="match status" value="1"/>
</dbReference>
<dbReference type="HAMAP" id="MF_00154">
    <property type="entry name" value="CyoE_CtaB"/>
    <property type="match status" value="1"/>
</dbReference>
<dbReference type="InterPro" id="IPR006369">
    <property type="entry name" value="Protohaem_IX_farnesylTrfase"/>
</dbReference>
<dbReference type="InterPro" id="IPR000537">
    <property type="entry name" value="UbiA_prenyltransferase"/>
</dbReference>
<dbReference type="InterPro" id="IPR030470">
    <property type="entry name" value="UbiA_prenylTrfase_CS"/>
</dbReference>
<dbReference type="InterPro" id="IPR044878">
    <property type="entry name" value="UbiA_sf"/>
</dbReference>
<dbReference type="NCBIfam" id="TIGR01473">
    <property type="entry name" value="cyoE_ctaB"/>
    <property type="match status" value="1"/>
</dbReference>
<dbReference type="NCBIfam" id="NF003349">
    <property type="entry name" value="PRK04375.1-2"/>
    <property type="match status" value="1"/>
</dbReference>
<dbReference type="PANTHER" id="PTHR43448:SF7">
    <property type="entry name" value="4-HYDROXYBENZOATE SOLANESYLTRANSFERASE"/>
    <property type="match status" value="1"/>
</dbReference>
<dbReference type="PANTHER" id="PTHR43448">
    <property type="entry name" value="PROTOHEME IX FARNESYLTRANSFERASE, MITOCHONDRIAL"/>
    <property type="match status" value="1"/>
</dbReference>
<dbReference type="Pfam" id="PF01040">
    <property type="entry name" value="UbiA"/>
    <property type="match status" value="1"/>
</dbReference>
<dbReference type="PROSITE" id="PS00943">
    <property type="entry name" value="UBIA"/>
    <property type="match status" value="1"/>
</dbReference>
<evidence type="ECO:0000255" key="1">
    <source>
        <dbReference type="HAMAP-Rule" id="MF_00154"/>
    </source>
</evidence>
<protein>
    <recommendedName>
        <fullName evidence="1">Protoheme IX farnesyltransferase</fullName>
        <ecNumber evidence="1">2.5.1.141</ecNumber>
    </recommendedName>
    <alternativeName>
        <fullName evidence="1">Heme B farnesyltransferase</fullName>
    </alternativeName>
    <alternativeName>
        <fullName evidence="1">Heme O synthase</fullName>
    </alternativeName>
</protein>
<gene>
    <name evidence="1" type="primary">ctaB</name>
</gene>
<comment type="function">
    <text evidence="1">Converts heme B (protoheme IX) to heme O by substitution of the vinyl group on carbon 2 of heme B porphyrin ring with a hydroxyethyl farnesyl side group.</text>
</comment>
<comment type="catalytic activity">
    <reaction evidence="1">
        <text>heme b + (2E,6E)-farnesyl diphosphate + H2O = Fe(II)-heme o + diphosphate</text>
        <dbReference type="Rhea" id="RHEA:28070"/>
        <dbReference type="ChEBI" id="CHEBI:15377"/>
        <dbReference type="ChEBI" id="CHEBI:33019"/>
        <dbReference type="ChEBI" id="CHEBI:60344"/>
        <dbReference type="ChEBI" id="CHEBI:60530"/>
        <dbReference type="ChEBI" id="CHEBI:175763"/>
        <dbReference type="EC" id="2.5.1.141"/>
    </reaction>
</comment>
<comment type="pathway">
    <text evidence="1">Porphyrin-containing compound metabolism; heme O biosynthesis; heme O from protoheme: step 1/1.</text>
</comment>
<comment type="subunit">
    <text evidence="1">Interacts with CtaA.</text>
</comment>
<comment type="subcellular location">
    <subcellularLocation>
        <location evidence="1">Cell inner membrane</location>
        <topology evidence="1">Multi-pass membrane protein</topology>
    </subcellularLocation>
</comment>
<comment type="miscellaneous">
    <text evidence="1">Carbon 2 of the heme B porphyrin ring is defined according to the Fischer nomenclature.</text>
</comment>
<comment type="similarity">
    <text evidence="1">Belongs to the UbiA prenyltransferase family. Protoheme IX farnesyltransferase subfamily.</text>
</comment>
<keyword id="KW-0997">Cell inner membrane</keyword>
<keyword id="KW-1003">Cell membrane</keyword>
<keyword id="KW-0350">Heme biosynthesis</keyword>
<keyword id="KW-0472">Membrane</keyword>
<keyword id="KW-0808">Transferase</keyword>
<keyword id="KW-0812">Transmembrane</keyword>
<keyword id="KW-1133">Transmembrane helix</keyword>
<organism>
    <name type="scientific">Cereibacter sphaeroides</name>
    <name type="common">Rhodobacter sphaeroides</name>
    <dbReference type="NCBI Taxonomy" id="1063"/>
    <lineage>
        <taxon>Bacteria</taxon>
        <taxon>Pseudomonadati</taxon>
        <taxon>Pseudomonadota</taxon>
        <taxon>Alphaproteobacteria</taxon>
        <taxon>Rhodobacterales</taxon>
        <taxon>Paracoccaceae</taxon>
        <taxon>Cereibacter</taxon>
    </lineage>
</organism>
<name>COXX_CERSP</name>
<sequence length="284" mass="30426">MSLVVFTALVGLLVAPVTVHPMIALTGILFIALGAGASGALNMWSHEDIDRVMKRTRNRPVPSGTVAPGEALGIGLALSGIAVVMLGLATNLFAAGLLAFTIFFYAVVYSMWLKRTTPQNIVIGGAAGAFPPMIGWAVATGGVSVESLFMFALIFMWTPPHFWSLALFMKSDYSDAGVPMLTVTHGRRVTRAHVLVYSLLLAPLAVAGAFTGTGGPLYLATALALNGWLLVGAVRTWRRDEAQAEADRYRVEKAFFRFSLYYLFLHFGAILAEAALKPYGLGGW</sequence>